<sequence>MDTKAFKRSLHKSEQYHRKGFGHEEEVTNLLQSEYNSKLIQQIRNNGYRLQQGDVTIHLAEAFGFCWGVERAIALAYETRRQFPQERIWITNEIIHNPSVNKNLRDMKVEFIPVQPDGQKDFTVVGQNDVVILPAFGASVQEMQLLHDKGCTIMDTTCPWVSKVWTSVEKHKKGSYTSIIHGKYKHEETIATSSFAGTYLVLLNLEEAEYVADYILNPGDTPSEREQRRADFMAKFANAHSPGFDPETDLERVGIANQTTMLKGETEQIGKLFERTVMRKYGPAQVNEHFLSFNTICDATQERQDAIFQLVDEPLDLMVVIGGFNSSNTTHLQEISIDKNIPSYHIDSVDRIGPGNRVEHKPLNADLTVTDNWLPNGPLAIGVTSGASTPDKVVSDIVEKIFSIKSASAEVVGVR</sequence>
<organism>
    <name type="scientific">Acaryochloris marina (strain MBIC 11017)</name>
    <dbReference type="NCBI Taxonomy" id="329726"/>
    <lineage>
        <taxon>Bacteria</taxon>
        <taxon>Bacillati</taxon>
        <taxon>Cyanobacteriota</taxon>
        <taxon>Cyanophyceae</taxon>
        <taxon>Acaryochloridales</taxon>
        <taxon>Acaryochloridaceae</taxon>
        <taxon>Acaryochloris</taxon>
    </lineage>
</organism>
<name>ISPH_ACAM1</name>
<keyword id="KW-0004">4Fe-4S</keyword>
<keyword id="KW-0408">Iron</keyword>
<keyword id="KW-0411">Iron-sulfur</keyword>
<keyword id="KW-0414">Isoprene biosynthesis</keyword>
<keyword id="KW-0479">Metal-binding</keyword>
<keyword id="KW-0560">Oxidoreductase</keyword>
<keyword id="KW-1185">Reference proteome</keyword>
<gene>
    <name evidence="1" type="primary">ispH</name>
    <name type="ordered locus">AM1_4950</name>
</gene>
<proteinExistence type="inferred from homology"/>
<reference key="1">
    <citation type="journal article" date="2008" name="Proc. Natl. Acad. Sci. U.S.A.">
        <title>Niche adaptation and genome expansion in the chlorophyll d-producing cyanobacterium Acaryochloris marina.</title>
        <authorList>
            <person name="Swingley W.D."/>
            <person name="Chen M."/>
            <person name="Cheung P.C."/>
            <person name="Conrad A.L."/>
            <person name="Dejesa L.C."/>
            <person name="Hao J."/>
            <person name="Honchak B.M."/>
            <person name="Karbach L.E."/>
            <person name="Kurdoglu A."/>
            <person name="Lahiri S."/>
            <person name="Mastrian S.D."/>
            <person name="Miyashita H."/>
            <person name="Page L."/>
            <person name="Ramakrishna P."/>
            <person name="Satoh S."/>
            <person name="Sattley W.M."/>
            <person name="Shimada Y."/>
            <person name="Taylor H.L."/>
            <person name="Tomo T."/>
            <person name="Tsuchiya T."/>
            <person name="Wang Z.T."/>
            <person name="Raymond J."/>
            <person name="Mimuro M."/>
            <person name="Blankenship R.E."/>
            <person name="Touchman J.W."/>
        </authorList>
    </citation>
    <scope>NUCLEOTIDE SEQUENCE [LARGE SCALE GENOMIC DNA]</scope>
    <source>
        <strain>MBIC 11017</strain>
    </source>
</reference>
<dbReference type="EC" id="1.17.7.4" evidence="1"/>
<dbReference type="EMBL" id="CP000828">
    <property type="protein sequence ID" value="ABW29921.1"/>
    <property type="molecule type" value="Genomic_DNA"/>
</dbReference>
<dbReference type="RefSeq" id="WP_012165194.1">
    <property type="nucleotide sequence ID" value="NC_009925.1"/>
</dbReference>
<dbReference type="SMR" id="B0C4N8"/>
<dbReference type="STRING" id="329726.AM1_4950"/>
<dbReference type="KEGG" id="amr:AM1_4950"/>
<dbReference type="eggNOG" id="COG0761">
    <property type="taxonomic scope" value="Bacteria"/>
</dbReference>
<dbReference type="HOGENOM" id="CLU_027486_4_0_3"/>
<dbReference type="OrthoDB" id="9804077at2"/>
<dbReference type="UniPathway" id="UPA00056">
    <property type="reaction ID" value="UER00097"/>
</dbReference>
<dbReference type="UniPathway" id="UPA00059">
    <property type="reaction ID" value="UER00105"/>
</dbReference>
<dbReference type="Proteomes" id="UP000000268">
    <property type="component" value="Chromosome"/>
</dbReference>
<dbReference type="GO" id="GO:0051539">
    <property type="term" value="F:4 iron, 4 sulfur cluster binding"/>
    <property type="evidence" value="ECO:0007669"/>
    <property type="project" value="UniProtKB-UniRule"/>
</dbReference>
<dbReference type="GO" id="GO:0051745">
    <property type="term" value="F:4-hydroxy-3-methylbut-2-enyl diphosphate reductase activity"/>
    <property type="evidence" value="ECO:0007669"/>
    <property type="project" value="UniProtKB-UniRule"/>
</dbReference>
<dbReference type="GO" id="GO:0046872">
    <property type="term" value="F:metal ion binding"/>
    <property type="evidence" value="ECO:0007669"/>
    <property type="project" value="UniProtKB-KW"/>
</dbReference>
<dbReference type="GO" id="GO:0050992">
    <property type="term" value="P:dimethylallyl diphosphate biosynthetic process"/>
    <property type="evidence" value="ECO:0007669"/>
    <property type="project" value="UniProtKB-UniRule"/>
</dbReference>
<dbReference type="GO" id="GO:0019288">
    <property type="term" value="P:isopentenyl diphosphate biosynthetic process, methylerythritol 4-phosphate pathway"/>
    <property type="evidence" value="ECO:0007669"/>
    <property type="project" value="UniProtKB-UniRule"/>
</dbReference>
<dbReference type="GO" id="GO:0016114">
    <property type="term" value="P:terpenoid biosynthetic process"/>
    <property type="evidence" value="ECO:0007669"/>
    <property type="project" value="UniProtKB-UniRule"/>
</dbReference>
<dbReference type="CDD" id="cd13944">
    <property type="entry name" value="lytB_ispH"/>
    <property type="match status" value="1"/>
</dbReference>
<dbReference type="Gene3D" id="3.40.50.11270">
    <property type="match status" value="1"/>
</dbReference>
<dbReference type="Gene3D" id="3.40.1010.20">
    <property type="entry name" value="4-hydroxy-3-methylbut-2-enyl diphosphate reductase, catalytic domain"/>
    <property type="match status" value="2"/>
</dbReference>
<dbReference type="HAMAP" id="MF_00191">
    <property type="entry name" value="IspH"/>
    <property type="match status" value="1"/>
</dbReference>
<dbReference type="InterPro" id="IPR003451">
    <property type="entry name" value="LytB/IspH"/>
</dbReference>
<dbReference type="NCBIfam" id="TIGR00216">
    <property type="entry name" value="ispH_lytB"/>
    <property type="match status" value="1"/>
</dbReference>
<dbReference type="NCBIfam" id="NF009911">
    <property type="entry name" value="PRK13371.1"/>
    <property type="match status" value="1"/>
</dbReference>
<dbReference type="PANTHER" id="PTHR31619">
    <property type="entry name" value="4-HYDROXY-3-METHYLBUT-2-ENYL DIPHOSPHATE REDUCTASE, CHLOROPLASTIC"/>
    <property type="match status" value="1"/>
</dbReference>
<dbReference type="PANTHER" id="PTHR31619:SF5">
    <property type="entry name" value="4-HYDROXY-3-METHYLBUT-2-ENYL DIPHOSPHATE REDUCTASE, CHLOROPLASTIC"/>
    <property type="match status" value="1"/>
</dbReference>
<dbReference type="Pfam" id="PF02401">
    <property type="entry name" value="LYTB"/>
    <property type="match status" value="1"/>
</dbReference>
<evidence type="ECO:0000255" key="1">
    <source>
        <dbReference type="HAMAP-Rule" id="MF_00191"/>
    </source>
</evidence>
<accession>B0C4N8</accession>
<protein>
    <recommendedName>
        <fullName evidence="1">4-hydroxy-3-methylbut-2-enyl diphosphate reductase</fullName>
        <shortName evidence="1">HMBPP reductase</shortName>
        <ecNumber evidence="1">1.17.7.4</ecNumber>
    </recommendedName>
</protein>
<comment type="function">
    <text evidence="1">Catalyzes the conversion of 1-hydroxy-2-methyl-2-(E)-butenyl 4-diphosphate (HMBPP) into a mixture of isopentenyl diphosphate (IPP) and dimethylallyl diphosphate (DMAPP). Acts in the terminal step of the DOXP/MEP pathway for isoprenoid precursor biosynthesis.</text>
</comment>
<comment type="catalytic activity">
    <reaction evidence="1">
        <text>isopentenyl diphosphate + 2 oxidized [2Fe-2S]-[ferredoxin] + H2O = (2E)-4-hydroxy-3-methylbut-2-enyl diphosphate + 2 reduced [2Fe-2S]-[ferredoxin] + 2 H(+)</text>
        <dbReference type="Rhea" id="RHEA:24488"/>
        <dbReference type="Rhea" id="RHEA-COMP:10000"/>
        <dbReference type="Rhea" id="RHEA-COMP:10001"/>
        <dbReference type="ChEBI" id="CHEBI:15377"/>
        <dbReference type="ChEBI" id="CHEBI:15378"/>
        <dbReference type="ChEBI" id="CHEBI:33737"/>
        <dbReference type="ChEBI" id="CHEBI:33738"/>
        <dbReference type="ChEBI" id="CHEBI:128753"/>
        <dbReference type="ChEBI" id="CHEBI:128769"/>
        <dbReference type="EC" id="1.17.7.4"/>
    </reaction>
</comment>
<comment type="catalytic activity">
    <reaction evidence="1">
        <text>dimethylallyl diphosphate + 2 oxidized [2Fe-2S]-[ferredoxin] + H2O = (2E)-4-hydroxy-3-methylbut-2-enyl diphosphate + 2 reduced [2Fe-2S]-[ferredoxin] + 2 H(+)</text>
        <dbReference type="Rhea" id="RHEA:24825"/>
        <dbReference type="Rhea" id="RHEA-COMP:10000"/>
        <dbReference type="Rhea" id="RHEA-COMP:10001"/>
        <dbReference type="ChEBI" id="CHEBI:15377"/>
        <dbReference type="ChEBI" id="CHEBI:15378"/>
        <dbReference type="ChEBI" id="CHEBI:33737"/>
        <dbReference type="ChEBI" id="CHEBI:33738"/>
        <dbReference type="ChEBI" id="CHEBI:57623"/>
        <dbReference type="ChEBI" id="CHEBI:128753"/>
        <dbReference type="EC" id="1.17.7.4"/>
    </reaction>
</comment>
<comment type="cofactor">
    <cofactor evidence="1">
        <name>[4Fe-4S] cluster</name>
        <dbReference type="ChEBI" id="CHEBI:49883"/>
    </cofactor>
    <text evidence="1">Binds 1 [4Fe-4S] cluster per subunit.</text>
</comment>
<comment type="pathway">
    <text evidence="1">Isoprenoid biosynthesis; dimethylallyl diphosphate biosynthesis; dimethylallyl diphosphate from (2E)-4-hydroxy-3-methylbutenyl diphosphate: step 1/1.</text>
</comment>
<comment type="pathway">
    <text evidence="1">Isoprenoid biosynthesis; isopentenyl diphosphate biosynthesis via DXP pathway; isopentenyl diphosphate from 1-deoxy-D-xylulose 5-phosphate: step 6/6.</text>
</comment>
<comment type="similarity">
    <text evidence="1">Belongs to the IspH family.</text>
</comment>
<feature type="chain" id="PRO_1000077510" description="4-hydroxy-3-methylbut-2-enyl diphosphate reductase">
    <location>
        <begin position="1"/>
        <end position="415"/>
    </location>
</feature>
<feature type="active site" description="Proton donor" evidence="1">
    <location>
        <position position="188"/>
    </location>
</feature>
<feature type="binding site" evidence="1">
    <location>
        <position position="66"/>
    </location>
    <ligand>
        <name>[4Fe-4S] cluster</name>
        <dbReference type="ChEBI" id="CHEBI:49883"/>
    </ligand>
</feature>
<feature type="binding site" evidence="1">
    <location>
        <position position="96"/>
    </location>
    <ligand>
        <name>(2E)-4-hydroxy-3-methylbut-2-enyl diphosphate</name>
        <dbReference type="ChEBI" id="CHEBI:128753"/>
    </ligand>
</feature>
<feature type="binding site" evidence="1">
    <location>
        <position position="96"/>
    </location>
    <ligand>
        <name>dimethylallyl diphosphate</name>
        <dbReference type="ChEBI" id="CHEBI:57623"/>
    </ligand>
</feature>
<feature type="binding site" evidence="1">
    <location>
        <position position="96"/>
    </location>
    <ligand>
        <name>isopentenyl diphosphate</name>
        <dbReference type="ChEBI" id="CHEBI:128769"/>
    </ligand>
</feature>
<feature type="binding site" evidence="1">
    <location>
        <position position="158"/>
    </location>
    <ligand>
        <name>[4Fe-4S] cluster</name>
        <dbReference type="ChEBI" id="CHEBI:49883"/>
    </ligand>
</feature>
<feature type="binding site" evidence="1">
    <location>
        <position position="186"/>
    </location>
    <ligand>
        <name>(2E)-4-hydroxy-3-methylbut-2-enyl diphosphate</name>
        <dbReference type="ChEBI" id="CHEBI:128753"/>
    </ligand>
</feature>
<feature type="binding site" evidence="1">
    <location>
        <position position="186"/>
    </location>
    <ligand>
        <name>dimethylallyl diphosphate</name>
        <dbReference type="ChEBI" id="CHEBI:57623"/>
    </ligand>
</feature>
<feature type="binding site" evidence="1">
    <location>
        <position position="186"/>
    </location>
    <ligand>
        <name>isopentenyl diphosphate</name>
        <dbReference type="ChEBI" id="CHEBI:128769"/>
    </ligand>
</feature>
<feature type="binding site" evidence="1">
    <location>
        <position position="259"/>
    </location>
    <ligand>
        <name>(2E)-4-hydroxy-3-methylbut-2-enyl diphosphate</name>
        <dbReference type="ChEBI" id="CHEBI:128753"/>
    </ligand>
</feature>
<feature type="binding site" evidence="1">
    <location>
        <position position="297"/>
    </location>
    <ligand>
        <name>[4Fe-4S] cluster</name>
        <dbReference type="ChEBI" id="CHEBI:49883"/>
    </ligand>
</feature>
<feature type="binding site" evidence="1">
    <location>
        <position position="326"/>
    </location>
    <ligand>
        <name>(2E)-4-hydroxy-3-methylbut-2-enyl diphosphate</name>
        <dbReference type="ChEBI" id="CHEBI:128753"/>
    </ligand>
</feature>
<feature type="binding site" evidence="1">
    <location>
        <position position="326"/>
    </location>
    <ligand>
        <name>dimethylallyl diphosphate</name>
        <dbReference type="ChEBI" id="CHEBI:57623"/>
    </ligand>
</feature>
<feature type="binding site" evidence="1">
    <location>
        <position position="326"/>
    </location>
    <ligand>
        <name>isopentenyl diphosphate</name>
        <dbReference type="ChEBI" id="CHEBI:128769"/>
    </ligand>
</feature>
<feature type="binding site" evidence="1">
    <location>
        <position position="327"/>
    </location>
    <ligand>
        <name>(2E)-4-hydroxy-3-methylbut-2-enyl diphosphate</name>
        <dbReference type="ChEBI" id="CHEBI:128753"/>
    </ligand>
</feature>
<feature type="binding site" evidence="1">
    <location>
        <position position="327"/>
    </location>
    <ligand>
        <name>dimethylallyl diphosphate</name>
        <dbReference type="ChEBI" id="CHEBI:57623"/>
    </ligand>
</feature>
<feature type="binding site" evidence="1">
    <location>
        <position position="327"/>
    </location>
    <ligand>
        <name>isopentenyl diphosphate</name>
        <dbReference type="ChEBI" id="CHEBI:128769"/>
    </ligand>
</feature>
<feature type="binding site" evidence="1">
    <location>
        <position position="328"/>
    </location>
    <ligand>
        <name>(2E)-4-hydroxy-3-methylbut-2-enyl diphosphate</name>
        <dbReference type="ChEBI" id="CHEBI:128753"/>
    </ligand>
</feature>
<feature type="binding site" evidence="1">
    <location>
        <position position="328"/>
    </location>
    <ligand>
        <name>dimethylallyl diphosphate</name>
        <dbReference type="ChEBI" id="CHEBI:57623"/>
    </ligand>
</feature>
<feature type="binding site" evidence="1">
    <location>
        <position position="328"/>
    </location>
    <ligand>
        <name>isopentenyl diphosphate</name>
        <dbReference type="ChEBI" id="CHEBI:128769"/>
    </ligand>
</feature>
<feature type="binding site" evidence="1">
    <location>
        <position position="388"/>
    </location>
    <ligand>
        <name>(2E)-4-hydroxy-3-methylbut-2-enyl diphosphate</name>
        <dbReference type="ChEBI" id="CHEBI:128753"/>
    </ligand>
</feature>
<feature type="binding site" evidence="1">
    <location>
        <position position="388"/>
    </location>
    <ligand>
        <name>dimethylallyl diphosphate</name>
        <dbReference type="ChEBI" id="CHEBI:57623"/>
    </ligand>
</feature>
<feature type="binding site" evidence="1">
    <location>
        <position position="388"/>
    </location>
    <ligand>
        <name>isopentenyl diphosphate</name>
        <dbReference type="ChEBI" id="CHEBI:128769"/>
    </ligand>
</feature>